<name>Y2777_DICDI</name>
<comment type="catalytic activity">
    <reaction>
        <text>L-seryl-[protein] + ATP = O-phospho-L-seryl-[protein] + ADP + H(+)</text>
        <dbReference type="Rhea" id="RHEA:17989"/>
        <dbReference type="Rhea" id="RHEA-COMP:9863"/>
        <dbReference type="Rhea" id="RHEA-COMP:11604"/>
        <dbReference type="ChEBI" id="CHEBI:15378"/>
        <dbReference type="ChEBI" id="CHEBI:29999"/>
        <dbReference type="ChEBI" id="CHEBI:30616"/>
        <dbReference type="ChEBI" id="CHEBI:83421"/>
        <dbReference type="ChEBI" id="CHEBI:456216"/>
        <dbReference type="EC" id="2.7.11.1"/>
    </reaction>
</comment>
<comment type="catalytic activity">
    <reaction>
        <text>L-threonyl-[protein] + ATP = O-phospho-L-threonyl-[protein] + ADP + H(+)</text>
        <dbReference type="Rhea" id="RHEA:46608"/>
        <dbReference type="Rhea" id="RHEA-COMP:11060"/>
        <dbReference type="Rhea" id="RHEA-COMP:11605"/>
        <dbReference type="ChEBI" id="CHEBI:15378"/>
        <dbReference type="ChEBI" id="CHEBI:30013"/>
        <dbReference type="ChEBI" id="CHEBI:30616"/>
        <dbReference type="ChEBI" id="CHEBI:61977"/>
        <dbReference type="ChEBI" id="CHEBI:456216"/>
        <dbReference type="EC" id="2.7.11.1"/>
    </reaction>
</comment>
<comment type="similarity">
    <text evidence="5">Belongs to the protein kinase superfamily. Ser/Thr protein kinase family.</text>
</comment>
<comment type="sequence caution" evidence="5">
    <conflict type="erroneous gene model prediction">
        <sequence resource="EMBL-CDS" id="EAL66248"/>
    </conflict>
</comment>
<keyword id="KW-0067">ATP-binding</keyword>
<keyword id="KW-0175">Coiled coil</keyword>
<keyword id="KW-0418">Kinase</keyword>
<keyword id="KW-0547">Nucleotide-binding</keyword>
<keyword id="KW-1185">Reference proteome</keyword>
<keyword id="KW-0723">Serine/threonine-protein kinase</keyword>
<keyword id="KW-0808">Transferase</keyword>
<sequence length="639" mass="75155">MDISGFLKENKESLKDLKEDDINEILEDYEIDNINDPKQKIRFFKQVENTRKRLKIEEKNRMLEEDINRMYEEEKNRMLEEEKKEFLIKVEEEKKEFLTKVEEEKQKLKTEVEDLKSIILTSSTKNGDLKGTTSYSELFKIKNSLKLIEENCEFKDWNIPSGIELKKHVINLDDCNQESTMQSKLDEYFKDFNKKRKLIITNGTKIKINSIISNRYCDYFINQKGFPFEPYWMHMVGDIKKGSISSDTNLDQVLKYIDIIVEKSNHHVLNRPMFGFLMNKTKIKFVKYDIENNKYYITIDYDLRIGFQYLSNIMIYLEQFIRNIPNSLQTILKNHTNDSVEFYYGATSSVFIVNKEFVYKWFNYPYFFQTEVKYLTFIDGIEGTPSIKQQNQTENWIQISPRGQLIKNLEGKPIDISFYTKVFCRNTQKHTSREVIHRDIRLSNLLMDSGGDPLLVDFGFANFTENEEFYQGTMNTASNRIYNILINNRTNHAFSVVESDDLESLVKVYIMENEQAVKRTIKSIPNSEIGLFRTMWEFFNTECFPQYSTLFQQAQNINYEELKNEFIKIDKIKNTTTTSNNNQNHTNIHKNTIANTTSYTNTLETSTTNPNTNTTTSDTNTSTTSTTNTNTTTSNTITA</sequence>
<reference key="1">
    <citation type="journal article" date="2005" name="Nature">
        <title>The genome of the social amoeba Dictyostelium discoideum.</title>
        <authorList>
            <person name="Eichinger L."/>
            <person name="Pachebat J.A."/>
            <person name="Gloeckner G."/>
            <person name="Rajandream M.A."/>
            <person name="Sucgang R."/>
            <person name="Berriman M."/>
            <person name="Song J."/>
            <person name="Olsen R."/>
            <person name="Szafranski K."/>
            <person name="Xu Q."/>
            <person name="Tunggal B."/>
            <person name="Kummerfeld S."/>
            <person name="Madera M."/>
            <person name="Konfortov B.A."/>
            <person name="Rivero F."/>
            <person name="Bankier A.T."/>
            <person name="Lehmann R."/>
            <person name="Hamlin N."/>
            <person name="Davies R."/>
            <person name="Gaudet P."/>
            <person name="Fey P."/>
            <person name="Pilcher K."/>
            <person name="Chen G."/>
            <person name="Saunders D."/>
            <person name="Sodergren E.J."/>
            <person name="Davis P."/>
            <person name="Kerhornou A."/>
            <person name="Nie X."/>
            <person name="Hall N."/>
            <person name="Anjard C."/>
            <person name="Hemphill L."/>
            <person name="Bason N."/>
            <person name="Farbrother P."/>
            <person name="Desany B."/>
            <person name="Just E."/>
            <person name="Morio T."/>
            <person name="Rost R."/>
            <person name="Churcher C.M."/>
            <person name="Cooper J."/>
            <person name="Haydock S."/>
            <person name="van Driessche N."/>
            <person name="Cronin A."/>
            <person name="Goodhead I."/>
            <person name="Muzny D.M."/>
            <person name="Mourier T."/>
            <person name="Pain A."/>
            <person name="Lu M."/>
            <person name="Harper D."/>
            <person name="Lindsay R."/>
            <person name="Hauser H."/>
            <person name="James K.D."/>
            <person name="Quiles M."/>
            <person name="Madan Babu M."/>
            <person name="Saito T."/>
            <person name="Buchrieser C."/>
            <person name="Wardroper A."/>
            <person name="Felder M."/>
            <person name="Thangavelu M."/>
            <person name="Johnson D."/>
            <person name="Knights A."/>
            <person name="Loulseged H."/>
            <person name="Mungall K.L."/>
            <person name="Oliver K."/>
            <person name="Price C."/>
            <person name="Quail M.A."/>
            <person name="Urushihara H."/>
            <person name="Hernandez J."/>
            <person name="Rabbinowitsch E."/>
            <person name="Steffen D."/>
            <person name="Sanders M."/>
            <person name="Ma J."/>
            <person name="Kohara Y."/>
            <person name="Sharp S."/>
            <person name="Simmonds M.N."/>
            <person name="Spiegler S."/>
            <person name="Tivey A."/>
            <person name="Sugano S."/>
            <person name="White B."/>
            <person name="Walker D."/>
            <person name="Woodward J.R."/>
            <person name="Winckler T."/>
            <person name="Tanaka Y."/>
            <person name="Shaulsky G."/>
            <person name="Schleicher M."/>
            <person name="Weinstock G.M."/>
            <person name="Rosenthal A."/>
            <person name="Cox E.C."/>
            <person name="Chisholm R.L."/>
            <person name="Gibbs R.A."/>
            <person name="Loomis W.F."/>
            <person name="Platzer M."/>
            <person name="Kay R.R."/>
            <person name="Williams J.G."/>
            <person name="Dear P.H."/>
            <person name="Noegel A.A."/>
            <person name="Barrell B.G."/>
            <person name="Kuspa A."/>
        </authorList>
    </citation>
    <scope>NUCLEOTIDE SEQUENCE [LARGE SCALE GENOMIC DNA]</scope>
    <source>
        <strain>AX4</strain>
    </source>
</reference>
<feature type="chain" id="PRO_0000362049" description="Probable serine/threonine-protein kinase DDB_G0282777">
    <location>
        <begin position="1"/>
        <end position="639"/>
    </location>
</feature>
<feature type="domain" description="Protein kinase">
    <location>
        <begin position="233"/>
        <end position="588"/>
    </location>
</feature>
<feature type="region of interest" description="Disordered" evidence="4">
    <location>
        <begin position="601"/>
        <end position="639"/>
    </location>
</feature>
<feature type="coiled-coil region" evidence="2">
    <location>
        <begin position="7"/>
        <end position="122"/>
    </location>
</feature>
<feature type="active site" description="Proton acceptor" evidence="3">
    <location>
        <position position="439"/>
    </location>
</feature>
<feature type="binding site" evidence="1">
    <location>
        <begin position="239"/>
        <end position="247"/>
    </location>
    <ligand>
        <name>ATP</name>
        <dbReference type="ChEBI" id="CHEBI:30616"/>
    </ligand>
</feature>
<feature type="binding site" evidence="1">
    <location>
        <position position="284"/>
    </location>
    <ligand>
        <name>ATP</name>
        <dbReference type="ChEBI" id="CHEBI:30616"/>
    </ligand>
</feature>
<accession>Q54SC4</accession>
<organism>
    <name type="scientific">Dictyostelium discoideum</name>
    <name type="common">Social amoeba</name>
    <dbReference type="NCBI Taxonomy" id="44689"/>
    <lineage>
        <taxon>Eukaryota</taxon>
        <taxon>Amoebozoa</taxon>
        <taxon>Evosea</taxon>
        <taxon>Eumycetozoa</taxon>
        <taxon>Dictyostelia</taxon>
        <taxon>Dictyosteliales</taxon>
        <taxon>Dictyosteliaceae</taxon>
        <taxon>Dictyostelium</taxon>
    </lineage>
</organism>
<gene>
    <name type="ORF">DDB_G0282777</name>
</gene>
<dbReference type="EC" id="2.7.11.1"/>
<dbReference type="EMBL" id="AAFI02000047">
    <property type="protein sequence ID" value="EAL66248.1"/>
    <property type="status" value="ALT_SEQ"/>
    <property type="molecule type" value="Genomic_DNA"/>
</dbReference>
<dbReference type="RefSeq" id="XP_640115.1">
    <property type="nucleotide sequence ID" value="XM_635023.1"/>
</dbReference>
<dbReference type="SMR" id="Q54SC4"/>
<dbReference type="FunCoup" id="Q54SC4">
    <property type="interactions" value="3"/>
</dbReference>
<dbReference type="STRING" id="44689.Q54SC4"/>
<dbReference type="GlyGen" id="Q54SC4">
    <property type="glycosylation" value="1 site"/>
</dbReference>
<dbReference type="PaxDb" id="44689-DDB0230125"/>
<dbReference type="EnsemblProtists" id="EAL66248">
    <property type="protein sequence ID" value="EAL66248"/>
    <property type="gene ID" value="DDB_G0282777"/>
</dbReference>
<dbReference type="GeneID" id="8623649"/>
<dbReference type="KEGG" id="ddi:DDB_G0282777"/>
<dbReference type="dictyBase" id="DDB_G0282777"/>
<dbReference type="VEuPathDB" id="AmoebaDB:DDB_G0282777"/>
<dbReference type="InParanoid" id="Q54SC4"/>
<dbReference type="PRO" id="PR:Q54SC4"/>
<dbReference type="Proteomes" id="UP000002195">
    <property type="component" value="Chromosome 3"/>
</dbReference>
<dbReference type="GO" id="GO:0005524">
    <property type="term" value="F:ATP binding"/>
    <property type="evidence" value="ECO:0007669"/>
    <property type="project" value="UniProtKB-KW"/>
</dbReference>
<dbReference type="GO" id="GO:0106310">
    <property type="term" value="F:protein serine kinase activity"/>
    <property type="evidence" value="ECO:0007669"/>
    <property type="project" value="RHEA"/>
</dbReference>
<dbReference type="GO" id="GO:0004674">
    <property type="term" value="F:protein serine/threonine kinase activity"/>
    <property type="evidence" value="ECO:0007669"/>
    <property type="project" value="UniProtKB-KW"/>
</dbReference>
<dbReference type="Gene3D" id="1.10.510.10">
    <property type="entry name" value="Transferase(Phosphotransferase) domain 1"/>
    <property type="match status" value="1"/>
</dbReference>
<dbReference type="InterPro" id="IPR011009">
    <property type="entry name" value="Kinase-like_dom_sf"/>
</dbReference>
<dbReference type="InterPro" id="IPR008266">
    <property type="entry name" value="Tyr_kinase_AS"/>
</dbReference>
<dbReference type="SUPFAM" id="SSF56112">
    <property type="entry name" value="Protein kinase-like (PK-like)"/>
    <property type="match status" value="2"/>
</dbReference>
<dbReference type="PROSITE" id="PS00109">
    <property type="entry name" value="PROTEIN_KINASE_TYR"/>
    <property type="match status" value="1"/>
</dbReference>
<proteinExistence type="inferred from homology"/>
<protein>
    <recommendedName>
        <fullName>Probable serine/threonine-protein kinase DDB_G0282777</fullName>
        <ecNumber>2.7.11.1</ecNumber>
    </recommendedName>
</protein>
<evidence type="ECO:0000250" key="1"/>
<evidence type="ECO:0000255" key="2"/>
<evidence type="ECO:0000255" key="3">
    <source>
        <dbReference type="PROSITE-ProRule" id="PRU10028"/>
    </source>
</evidence>
<evidence type="ECO:0000256" key="4">
    <source>
        <dbReference type="SAM" id="MobiDB-lite"/>
    </source>
</evidence>
<evidence type="ECO:0000305" key="5"/>